<comment type="function">
    <text evidence="1">NDH-1 shuttles electrons from NADH, via FMN and iron-sulfur (Fe-S) centers, to quinones in the respiratory chain. The immediate electron acceptor for the enzyme in this species is believed to be ubiquinone. Couples the redox reaction to proton translocation (for every two electrons transferred, four hydrogen ions are translocated across the cytoplasmic membrane), and thus conserves the redox energy in a proton gradient.</text>
</comment>
<comment type="catalytic activity">
    <reaction evidence="1">
        <text>a quinone + NADH + 5 H(+)(in) = a quinol + NAD(+) + 4 H(+)(out)</text>
        <dbReference type="Rhea" id="RHEA:57888"/>
        <dbReference type="ChEBI" id="CHEBI:15378"/>
        <dbReference type="ChEBI" id="CHEBI:24646"/>
        <dbReference type="ChEBI" id="CHEBI:57540"/>
        <dbReference type="ChEBI" id="CHEBI:57945"/>
        <dbReference type="ChEBI" id="CHEBI:132124"/>
    </reaction>
</comment>
<comment type="subunit">
    <text evidence="1">NDH-1 is composed of 14 different subunits. Subunits NuoA, H, J, K, L, M, N constitute the membrane sector of the complex.</text>
</comment>
<comment type="subcellular location">
    <subcellularLocation>
        <location evidence="1">Cell inner membrane</location>
        <topology evidence="1">Multi-pass membrane protein</topology>
    </subcellularLocation>
</comment>
<comment type="similarity">
    <text evidence="1">Belongs to the complex I subunit 4L family.</text>
</comment>
<gene>
    <name evidence="1" type="primary">nuoK</name>
    <name type="ordered locus">Mmc1_3625</name>
</gene>
<dbReference type="EC" id="7.1.1.-" evidence="1"/>
<dbReference type="EMBL" id="CP000471">
    <property type="protein sequence ID" value="ABK46110.1"/>
    <property type="molecule type" value="Genomic_DNA"/>
</dbReference>
<dbReference type="RefSeq" id="WP_011715164.1">
    <property type="nucleotide sequence ID" value="NC_008576.1"/>
</dbReference>
<dbReference type="SMR" id="A0LDR7"/>
<dbReference type="STRING" id="156889.Mmc1_3625"/>
<dbReference type="KEGG" id="mgm:Mmc1_3625"/>
<dbReference type="eggNOG" id="COG0713">
    <property type="taxonomic scope" value="Bacteria"/>
</dbReference>
<dbReference type="HOGENOM" id="CLU_144724_2_0_5"/>
<dbReference type="OrthoDB" id="9811124at2"/>
<dbReference type="Proteomes" id="UP000002586">
    <property type="component" value="Chromosome"/>
</dbReference>
<dbReference type="GO" id="GO:0030964">
    <property type="term" value="C:NADH dehydrogenase complex"/>
    <property type="evidence" value="ECO:0007669"/>
    <property type="project" value="TreeGrafter"/>
</dbReference>
<dbReference type="GO" id="GO:0005886">
    <property type="term" value="C:plasma membrane"/>
    <property type="evidence" value="ECO:0007669"/>
    <property type="project" value="UniProtKB-SubCell"/>
</dbReference>
<dbReference type="GO" id="GO:0050136">
    <property type="term" value="F:NADH:ubiquinone reductase (non-electrogenic) activity"/>
    <property type="evidence" value="ECO:0007669"/>
    <property type="project" value="UniProtKB-UniRule"/>
</dbReference>
<dbReference type="GO" id="GO:0048038">
    <property type="term" value="F:quinone binding"/>
    <property type="evidence" value="ECO:0007669"/>
    <property type="project" value="UniProtKB-KW"/>
</dbReference>
<dbReference type="GO" id="GO:0042773">
    <property type="term" value="P:ATP synthesis coupled electron transport"/>
    <property type="evidence" value="ECO:0007669"/>
    <property type="project" value="InterPro"/>
</dbReference>
<dbReference type="FunFam" id="1.10.287.3510:FF:000001">
    <property type="entry name" value="NADH-quinone oxidoreductase subunit K"/>
    <property type="match status" value="1"/>
</dbReference>
<dbReference type="Gene3D" id="1.10.287.3510">
    <property type="match status" value="1"/>
</dbReference>
<dbReference type="HAMAP" id="MF_01456">
    <property type="entry name" value="NDH1_NuoK"/>
    <property type="match status" value="1"/>
</dbReference>
<dbReference type="InterPro" id="IPR001133">
    <property type="entry name" value="NADH_UbQ_OxRdtase_chain4L/K"/>
</dbReference>
<dbReference type="InterPro" id="IPR039428">
    <property type="entry name" value="NUOK/Mnh_C1-like"/>
</dbReference>
<dbReference type="NCBIfam" id="NF004320">
    <property type="entry name" value="PRK05715.1-2"/>
    <property type="match status" value="1"/>
</dbReference>
<dbReference type="NCBIfam" id="NF004321">
    <property type="entry name" value="PRK05715.1-3"/>
    <property type="match status" value="1"/>
</dbReference>
<dbReference type="NCBIfam" id="NF004323">
    <property type="entry name" value="PRK05715.1-5"/>
    <property type="match status" value="1"/>
</dbReference>
<dbReference type="PANTHER" id="PTHR11434:SF21">
    <property type="entry name" value="NADH DEHYDROGENASE SUBUNIT 4L-RELATED"/>
    <property type="match status" value="1"/>
</dbReference>
<dbReference type="PANTHER" id="PTHR11434">
    <property type="entry name" value="NADH-UBIQUINONE OXIDOREDUCTASE SUBUNIT ND4L"/>
    <property type="match status" value="1"/>
</dbReference>
<dbReference type="Pfam" id="PF00420">
    <property type="entry name" value="Oxidored_q2"/>
    <property type="match status" value="1"/>
</dbReference>
<sequence>MSLNAYLVLAAMLFTIGVFGIFLNRKNVISIMMSIELMLLAVNINFVAFSHYLHDLTGQIFTFFVVTVAAAEAAIGLAILVTFFRNRTTINVEEIDTLKG</sequence>
<feature type="chain" id="PRO_0000390114" description="NADH-quinone oxidoreductase subunit K">
    <location>
        <begin position="1"/>
        <end position="100"/>
    </location>
</feature>
<feature type="transmembrane region" description="Helical" evidence="1">
    <location>
        <begin position="3"/>
        <end position="23"/>
    </location>
</feature>
<feature type="transmembrane region" description="Helical" evidence="1">
    <location>
        <begin position="29"/>
        <end position="49"/>
    </location>
</feature>
<feature type="transmembrane region" description="Helical" evidence="1">
    <location>
        <begin position="60"/>
        <end position="80"/>
    </location>
</feature>
<accession>A0LDR7</accession>
<proteinExistence type="inferred from homology"/>
<evidence type="ECO:0000255" key="1">
    <source>
        <dbReference type="HAMAP-Rule" id="MF_01456"/>
    </source>
</evidence>
<keyword id="KW-0997">Cell inner membrane</keyword>
<keyword id="KW-1003">Cell membrane</keyword>
<keyword id="KW-0472">Membrane</keyword>
<keyword id="KW-0520">NAD</keyword>
<keyword id="KW-0874">Quinone</keyword>
<keyword id="KW-1185">Reference proteome</keyword>
<keyword id="KW-1278">Translocase</keyword>
<keyword id="KW-0812">Transmembrane</keyword>
<keyword id="KW-1133">Transmembrane helix</keyword>
<keyword id="KW-0813">Transport</keyword>
<keyword id="KW-0830">Ubiquinone</keyword>
<organism>
    <name type="scientific">Magnetococcus marinus (strain ATCC BAA-1437 / JCM 17883 / MC-1)</name>
    <dbReference type="NCBI Taxonomy" id="156889"/>
    <lineage>
        <taxon>Bacteria</taxon>
        <taxon>Pseudomonadati</taxon>
        <taxon>Pseudomonadota</taxon>
        <taxon>Alphaproteobacteria</taxon>
        <taxon>Magnetococcales</taxon>
        <taxon>Magnetococcaceae</taxon>
        <taxon>Magnetococcus</taxon>
    </lineage>
</organism>
<name>NUOK_MAGMM</name>
<protein>
    <recommendedName>
        <fullName evidence="1">NADH-quinone oxidoreductase subunit K</fullName>
        <ecNumber evidence="1">7.1.1.-</ecNumber>
    </recommendedName>
    <alternativeName>
        <fullName evidence="1">NADH dehydrogenase I subunit K</fullName>
    </alternativeName>
    <alternativeName>
        <fullName evidence="1">NDH-1 subunit K</fullName>
    </alternativeName>
</protein>
<reference key="1">
    <citation type="journal article" date="2009" name="Appl. Environ. Microbiol.">
        <title>Complete genome sequence of the chemolithoautotrophic marine magnetotactic coccus strain MC-1.</title>
        <authorList>
            <person name="Schubbe S."/>
            <person name="Williams T.J."/>
            <person name="Xie G."/>
            <person name="Kiss H.E."/>
            <person name="Brettin T.S."/>
            <person name="Martinez D."/>
            <person name="Ross C.A."/>
            <person name="Schuler D."/>
            <person name="Cox B.L."/>
            <person name="Nealson K.H."/>
            <person name="Bazylinski D.A."/>
        </authorList>
    </citation>
    <scope>NUCLEOTIDE SEQUENCE [LARGE SCALE GENOMIC DNA]</scope>
    <source>
        <strain>ATCC BAA-1437 / JCM 17883 / MC-1</strain>
    </source>
</reference>